<dbReference type="EMBL" id="AE016877">
    <property type="protein sequence ID" value="AAP11112.1"/>
    <property type="molecule type" value="Genomic_DNA"/>
</dbReference>
<dbReference type="RefSeq" id="NP_833911.1">
    <property type="nucleotide sequence ID" value="NC_004722.1"/>
</dbReference>
<dbReference type="RefSeq" id="WP_000626516.1">
    <property type="nucleotide sequence ID" value="NZ_CP138336.1"/>
</dbReference>
<dbReference type="SMR" id="Q812U1"/>
<dbReference type="STRING" id="226900.BC_4197"/>
<dbReference type="MetOSite" id="Q812U1"/>
<dbReference type="KEGG" id="bce:BC4197"/>
<dbReference type="PATRIC" id="fig|226900.8.peg.4336"/>
<dbReference type="HOGENOM" id="CLU_074944_0_1_9"/>
<dbReference type="OrthoDB" id="9801844at2"/>
<dbReference type="UniPathway" id="UPA00345"/>
<dbReference type="Proteomes" id="UP000001417">
    <property type="component" value="Chromosome"/>
</dbReference>
<dbReference type="GO" id="GO:0005737">
    <property type="term" value="C:cytoplasm"/>
    <property type="evidence" value="ECO:0000318"/>
    <property type="project" value="GO_Central"/>
</dbReference>
<dbReference type="GO" id="GO:0003746">
    <property type="term" value="F:translation elongation factor activity"/>
    <property type="evidence" value="ECO:0000318"/>
    <property type="project" value="GO_Central"/>
</dbReference>
<dbReference type="GO" id="GO:0043043">
    <property type="term" value="P:peptide biosynthetic process"/>
    <property type="evidence" value="ECO:0007669"/>
    <property type="project" value="InterPro"/>
</dbReference>
<dbReference type="CDD" id="cd04470">
    <property type="entry name" value="S1_EF-P_repeat_1"/>
    <property type="match status" value="1"/>
</dbReference>
<dbReference type="CDD" id="cd05794">
    <property type="entry name" value="S1_EF-P_repeat_2"/>
    <property type="match status" value="1"/>
</dbReference>
<dbReference type="FunFam" id="2.30.30.30:FF:000010">
    <property type="entry name" value="Elongation factor P"/>
    <property type="match status" value="1"/>
</dbReference>
<dbReference type="FunFam" id="2.40.50.140:FF:000004">
    <property type="entry name" value="Elongation factor P"/>
    <property type="match status" value="1"/>
</dbReference>
<dbReference type="FunFam" id="2.40.50.140:FF:000009">
    <property type="entry name" value="Elongation factor P"/>
    <property type="match status" value="1"/>
</dbReference>
<dbReference type="Gene3D" id="2.30.30.30">
    <property type="match status" value="1"/>
</dbReference>
<dbReference type="Gene3D" id="2.40.50.140">
    <property type="entry name" value="Nucleic acid-binding proteins"/>
    <property type="match status" value="2"/>
</dbReference>
<dbReference type="HAMAP" id="MF_00141">
    <property type="entry name" value="EF_P"/>
    <property type="match status" value="1"/>
</dbReference>
<dbReference type="InterPro" id="IPR015365">
    <property type="entry name" value="Elong-fact-P_C"/>
</dbReference>
<dbReference type="InterPro" id="IPR012340">
    <property type="entry name" value="NA-bd_OB-fold"/>
</dbReference>
<dbReference type="InterPro" id="IPR014722">
    <property type="entry name" value="Rib_uL2_dom2"/>
</dbReference>
<dbReference type="InterPro" id="IPR020599">
    <property type="entry name" value="Transl_elong_fac_P/YeiP"/>
</dbReference>
<dbReference type="InterPro" id="IPR013185">
    <property type="entry name" value="Transl_elong_KOW-like"/>
</dbReference>
<dbReference type="InterPro" id="IPR001059">
    <property type="entry name" value="Transl_elong_P/YeiP_cen"/>
</dbReference>
<dbReference type="InterPro" id="IPR013852">
    <property type="entry name" value="Transl_elong_P/YeiP_CS"/>
</dbReference>
<dbReference type="InterPro" id="IPR011768">
    <property type="entry name" value="Transl_elongation_fac_P"/>
</dbReference>
<dbReference type="InterPro" id="IPR008991">
    <property type="entry name" value="Translation_prot_SH3-like_sf"/>
</dbReference>
<dbReference type="NCBIfam" id="TIGR00038">
    <property type="entry name" value="efp"/>
    <property type="match status" value="1"/>
</dbReference>
<dbReference type="NCBIfam" id="NF001810">
    <property type="entry name" value="PRK00529.1"/>
    <property type="match status" value="1"/>
</dbReference>
<dbReference type="PANTHER" id="PTHR30053">
    <property type="entry name" value="ELONGATION FACTOR P"/>
    <property type="match status" value="1"/>
</dbReference>
<dbReference type="PANTHER" id="PTHR30053:SF12">
    <property type="entry name" value="ELONGATION FACTOR P (EF-P) FAMILY PROTEIN"/>
    <property type="match status" value="1"/>
</dbReference>
<dbReference type="Pfam" id="PF01132">
    <property type="entry name" value="EFP"/>
    <property type="match status" value="1"/>
</dbReference>
<dbReference type="Pfam" id="PF08207">
    <property type="entry name" value="EFP_N"/>
    <property type="match status" value="1"/>
</dbReference>
<dbReference type="Pfam" id="PF09285">
    <property type="entry name" value="Elong-fact-P_C"/>
    <property type="match status" value="1"/>
</dbReference>
<dbReference type="PIRSF" id="PIRSF005901">
    <property type="entry name" value="EF-P"/>
    <property type="match status" value="1"/>
</dbReference>
<dbReference type="SMART" id="SM01185">
    <property type="entry name" value="EFP"/>
    <property type="match status" value="1"/>
</dbReference>
<dbReference type="SMART" id="SM00841">
    <property type="entry name" value="Elong-fact-P_C"/>
    <property type="match status" value="1"/>
</dbReference>
<dbReference type="SUPFAM" id="SSF50249">
    <property type="entry name" value="Nucleic acid-binding proteins"/>
    <property type="match status" value="2"/>
</dbReference>
<dbReference type="SUPFAM" id="SSF50104">
    <property type="entry name" value="Translation proteins SH3-like domain"/>
    <property type="match status" value="1"/>
</dbReference>
<dbReference type="PROSITE" id="PS01275">
    <property type="entry name" value="EFP"/>
    <property type="match status" value="1"/>
</dbReference>
<comment type="function">
    <text evidence="1">Involved in peptide bond synthesis. Stimulates efficient translation and peptide-bond synthesis on native or reconstituted 70S ribosomes in vitro. Probably functions indirectly by altering the affinity of the ribosome for aminoacyl-tRNA, thus increasing their reactivity as acceptors for peptidyl transferase.</text>
</comment>
<comment type="pathway">
    <text evidence="1">Protein biosynthesis; polypeptide chain elongation.</text>
</comment>
<comment type="subcellular location">
    <subcellularLocation>
        <location evidence="1">Cytoplasm</location>
    </subcellularLocation>
</comment>
<comment type="similarity">
    <text evidence="1">Belongs to the elongation factor P family.</text>
</comment>
<organism>
    <name type="scientific">Bacillus cereus (strain ATCC 14579 / DSM 31 / CCUG 7414 / JCM 2152 / NBRC 15305 / NCIMB 9373 / NCTC 2599 / NRRL B-3711)</name>
    <dbReference type="NCBI Taxonomy" id="226900"/>
    <lineage>
        <taxon>Bacteria</taxon>
        <taxon>Bacillati</taxon>
        <taxon>Bacillota</taxon>
        <taxon>Bacilli</taxon>
        <taxon>Bacillales</taxon>
        <taxon>Bacillaceae</taxon>
        <taxon>Bacillus</taxon>
        <taxon>Bacillus cereus group</taxon>
    </lineage>
</organism>
<feature type="chain" id="PRO_0000094193" description="Elongation factor P">
    <location>
        <begin position="1"/>
        <end position="185"/>
    </location>
</feature>
<evidence type="ECO:0000255" key="1">
    <source>
        <dbReference type="HAMAP-Rule" id="MF_00141"/>
    </source>
</evidence>
<protein>
    <recommendedName>
        <fullName evidence="1">Elongation factor P</fullName>
        <shortName evidence="1">EF-P</shortName>
    </recommendedName>
</protein>
<keyword id="KW-0963">Cytoplasm</keyword>
<keyword id="KW-0251">Elongation factor</keyword>
<keyword id="KW-0648">Protein biosynthesis</keyword>
<keyword id="KW-1185">Reference proteome</keyword>
<accession>Q812U1</accession>
<gene>
    <name evidence="1" type="primary">efp</name>
    <name type="ordered locus">BC_4197</name>
</gene>
<sequence length="185" mass="20706">MISVNDFRTGLTISVDNALWQVLDFQHVKPGKGAAFVRSKLRNLRTGSVQEKTFRAGEKVEKAHIENRRMQYLYASGEAHVFMDNGTYEQIELGEKQIERELKFLKENMEVAIMTYQGEVLGVELPNTVELQVTETEPGIKGDTASNVTKPATLETGLVVQVPIFINEGEMLIINTGEGKYVSRA</sequence>
<reference key="1">
    <citation type="journal article" date="2003" name="Nature">
        <title>Genome sequence of Bacillus cereus and comparative analysis with Bacillus anthracis.</title>
        <authorList>
            <person name="Ivanova N."/>
            <person name="Sorokin A."/>
            <person name="Anderson I."/>
            <person name="Galleron N."/>
            <person name="Candelon B."/>
            <person name="Kapatral V."/>
            <person name="Bhattacharyya A."/>
            <person name="Reznik G."/>
            <person name="Mikhailova N."/>
            <person name="Lapidus A."/>
            <person name="Chu L."/>
            <person name="Mazur M."/>
            <person name="Goltsman E."/>
            <person name="Larsen N."/>
            <person name="D'Souza M."/>
            <person name="Walunas T."/>
            <person name="Grechkin Y."/>
            <person name="Pusch G."/>
            <person name="Haselkorn R."/>
            <person name="Fonstein M."/>
            <person name="Ehrlich S.D."/>
            <person name="Overbeek R."/>
            <person name="Kyrpides N.C."/>
        </authorList>
    </citation>
    <scope>NUCLEOTIDE SEQUENCE [LARGE SCALE GENOMIC DNA]</scope>
    <source>
        <strain>ATCC 14579 / DSM 31 / CCUG 7414 / JCM 2152 / NBRC 15305 / NCIMB 9373 / NCTC 2599 / NRRL B-3711</strain>
    </source>
</reference>
<proteinExistence type="inferred from homology"/>
<name>EFP_BACCR</name>